<evidence type="ECO:0000255" key="1">
    <source>
        <dbReference type="HAMAP-Rule" id="MF_01716"/>
    </source>
</evidence>
<gene>
    <name evidence="1" type="primary">rbsA</name>
    <name type="ordered locus">VVA0569</name>
</gene>
<protein>
    <recommendedName>
        <fullName evidence="1">Ribose import ATP-binding protein RbsA</fullName>
        <ecNumber evidence="1">7.5.2.7</ecNumber>
    </recommendedName>
</protein>
<reference key="1">
    <citation type="journal article" date="2003" name="Genome Res.">
        <title>Comparative genome analysis of Vibrio vulnificus, a marine pathogen.</title>
        <authorList>
            <person name="Chen C.-Y."/>
            <person name="Wu K.-M."/>
            <person name="Chang Y.-C."/>
            <person name="Chang C.-H."/>
            <person name="Tsai H.-C."/>
            <person name="Liao T.-L."/>
            <person name="Liu Y.-M."/>
            <person name="Chen H.-J."/>
            <person name="Shen A.B.-T."/>
            <person name="Li J.-C."/>
            <person name="Su T.-L."/>
            <person name="Shao C.-P."/>
            <person name="Lee C.-T."/>
            <person name="Hor L.-I."/>
            <person name="Tsai S.-F."/>
        </authorList>
    </citation>
    <scope>NUCLEOTIDE SEQUENCE [LARGE SCALE GENOMIC DNA]</scope>
    <source>
        <strain>YJ016</strain>
    </source>
</reference>
<keyword id="KW-0067">ATP-binding</keyword>
<keyword id="KW-0997">Cell inner membrane</keyword>
<keyword id="KW-1003">Cell membrane</keyword>
<keyword id="KW-0472">Membrane</keyword>
<keyword id="KW-0547">Nucleotide-binding</keyword>
<keyword id="KW-0677">Repeat</keyword>
<keyword id="KW-0762">Sugar transport</keyword>
<keyword id="KW-1278">Translocase</keyword>
<keyword id="KW-0813">Transport</keyword>
<proteinExistence type="inferred from homology"/>
<feature type="chain" id="PRO_0000261119" description="Ribose import ATP-binding protein RbsA">
    <location>
        <begin position="1"/>
        <end position="501"/>
    </location>
</feature>
<feature type="domain" description="ABC transporter 1" evidence="1">
    <location>
        <begin position="6"/>
        <end position="242"/>
    </location>
</feature>
<feature type="domain" description="ABC transporter 2" evidence="1">
    <location>
        <begin position="253"/>
        <end position="495"/>
    </location>
</feature>
<feature type="binding site" evidence="1">
    <location>
        <begin position="38"/>
        <end position="45"/>
    </location>
    <ligand>
        <name>ATP</name>
        <dbReference type="ChEBI" id="CHEBI:30616"/>
    </ligand>
</feature>
<comment type="function">
    <text evidence="1">Part of the ABC transporter complex RbsABC involved in ribose import. Responsible for energy coupling to the transport system.</text>
</comment>
<comment type="catalytic activity">
    <reaction evidence="1">
        <text>D-ribose(out) + ATP + H2O = D-ribose(in) + ADP + phosphate + H(+)</text>
        <dbReference type="Rhea" id="RHEA:29903"/>
        <dbReference type="ChEBI" id="CHEBI:15377"/>
        <dbReference type="ChEBI" id="CHEBI:15378"/>
        <dbReference type="ChEBI" id="CHEBI:30616"/>
        <dbReference type="ChEBI" id="CHEBI:43474"/>
        <dbReference type="ChEBI" id="CHEBI:47013"/>
        <dbReference type="ChEBI" id="CHEBI:456216"/>
        <dbReference type="EC" id="7.5.2.7"/>
    </reaction>
</comment>
<comment type="subunit">
    <text evidence="1">The complex is composed of an ATP-binding protein (RbsA), two transmembrane proteins (RbsC) and a solute-binding protein (RbsB).</text>
</comment>
<comment type="subcellular location">
    <subcellularLocation>
        <location evidence="1">Cell inner membrane</location>
        <topology evidence="1">Peripheral membrane protein</topology>
    </subcellularLocation>
</comment>
<comment type="similarity">
    <text evidence="1">Belongs to the ABC transporter superfamily. Ribose importer (TC 3.A.1.2.1) family.</text>
</comment>
<name>RBSA_VIBVY</name>
<sequence>MNQAILQLSEIEKAFPGVKALDKASLNVYPGRVMALMGENGAGKSTLMKVLTGIYSRDAGEIVYQGQPAQFKGPRDSQQAGISIIHQELNLIRELTIAENIFLGREITSAFGRIDWPQMYAEADKLLARLKVKHSSKTLLGQLSLGEQQMVEIAKALSFESKVIIMDEPTDALTDTETEALFSVIRELREQGCGIVYISHRLKEIFEICDDITVLRDGKFIGQCEVVQTDEDGLIEMMVGRKLEEQYPRIDVVHGQTCLEVIGLTGSGVHDVSFTLKRGEILGISGLMGAGRTELMKVIYGALPSERGVINLDNRTINPVSPQDGLANGIAYISEDRKGDGLVLGLSVKENMSLCALDKLSKGVQIQHQDEVVAVDDFIQLFNIKTPSREQIIGNLSGGNQQKVAIAKGLMTKPKVLILDEPTRGVDVGAKKEIYQLINKFKAEGMSIILVSSEMPEVLGMSDRILVMHEGRITGEFEAKHADQEKLMACAVGKKVSEEAA</sequence>
<organism>
    <name type="scientific">Vibrio vulnificus (strain YJ016)</name>
    <dbReference type="NCBI Taxonomy" id="196600"/>
    <lineage>
        <taxon>Bacteria</taxon>
        <taxon>Pseudomonadati</taxon>
        <taxon>Pseudomonadota</taxon>
        <taxon>Gammaproteobacteria</taxon>
        <taxon>Vibrionales</taxon>
        <taxon>Vibrionaceae</taxon>
        <taxon>Vibrio</taxon>
    </lineage>
</organism>
<accession>Q7MEV1</accession>
<dbReference type="EC" id="7.5.2.7" evidence="1"/>
<dbReference type="EMBL" id="BA000038">
    <property type="protein sequence ID" value="BAC96595.1"/>
    <property type="molecule type" value="Genomic_DNA"/>
</dbReference>
<dbReference type="RefSeq" id="WP_011151929.1">
    <property type="nucleotide sequence ID" value="NC_005140.1"/>
</dbReference>
<dbReference type="SMR" id="Q7MEV1"/>
<dbReference type="STRING" id="672.VV93_v1c35720"/>
<dbReference type="KEGG" id="vvy:VVA0569"/>
<dbReference type="PATRIC" id="fig|196600.6.peg.3768"/>
<dbReference type="eggNOG" id="COG1129">
    <property type="taxonomic scope" value="Bacteria"/>
</dbReference>
<dbReference type="HOGENOM" id="CLU_000604_92_3_6"/>
<dbReference type="Proteomes" id="UP000002675">
    <property type="component" value="Chromosome II"/>
</dbReference>
<dbReference type="GO" id="GO:0005886">
    <property type="term" value="C:plasma membrane"/>
    <property type="evidence" value="ECO:0007669"/>
    <property type="project" value="UniProtKB-SubCell"/>
</dbReference>
<dbReference type="GO" id="GO:0015611">
    <property type="term" value="F:ABC-type D-ribose transporter activity"/>
    <property type="evidence" value="ECO:0007669"/>
    <property type="project" value="UniProtKB-EC"/>
</dbReference>
<dbReference type="GO" id="GO:0005524">
    <property type="term" value="F:ATP binding"/>
    <property type="evidence" value="ECO:0007669"/>
    <property type="project" value="UniProtKB-KW"/>
</dbReference>
<dbReference type="GO" id="GO:0016887">
    <property type="term" value="F:ATP hydrolysis activity"/>
    <property type="evidence" value="ECO:0007669"/>
    <property type="project" value="InterPro"/>
</dbReference>
<dbReference type="CDD" id="cd03216">
    <property type="entry name" value="ABC_Carb_Monos_I"/>
    <property type="match status" value="1"/>
</dbReference>
<dbReference type="CDD" id="cd03215">
    <property type="entry name" value="ABC_Carb_Monos_II"/>
    <property type="match status" value="1"/>
</dbReference>
<dbReference type="FunFam" id="3.40.50.300:FF:000126">
    <property type="entry name" value="Galactose/methyl galactoside import ATP-binding protein MglA"/>
    <property type="match status" value="1"/>
</dbReference>
<dbReference type="FunFam" id="3.40.50.300:FF:000127">
    <property type="entry name" value="Ribose import ATP-binding protein RbsA"/>
    <property type="match status" value="1"/>
</dbReference>
<dbReference type="Gene3D" id="3.40.50.300">
    <property type="entry name" value="P-loop containing nucleotide triphosphate hydrolases"/>
    <property type="match status" value="2"/>
</dbReference>
<dbReference type="InterPro" id="IPR003593">
    <property type="entry name" value="AAA+_ATPase"/>
</dbReference>
<dbReference type="InterPro" id="IPR050107">
    <property type="entry name" value="ABC_carbohydrate_import_ATPase"/>
</dbReference>
<dbReference type="InterPro" id="IPR003439">
    <property type="entry name" value="ABC_transporter-like_ATP-bd"/>
</dbReference>
<dbReference type="InterPro" id="IPR017871">
    <property type="entry name" value="ABC_transporter-like_CS"/>
</dbReference>
<dbReference type="InterPro" id="IPR027417">
    <property type="entry name" value="P-loop_NTPase"/>
</dbReference>
<dbReference type="NCBIfam" id="NF008030">
    <property type="entry name" value="PRK10762.1"/>
    <property type="match status" value="1"/>
</dbReference>
<dbReference type="PANTHER" id="PTHR43790">
    <property type="entry name" value="CARBOHYDRATE TRANSPORT ATP-BINDING PROTEIN MG119-RELATED"/>
    <property type="match status" value="1"/>
</dbReference>
<dbReference type="PANTHER" id="PTHR43790:SF3">
    <property type="entry name" value="D-ALLOSE IMPORT ATP-BINDING PROTEIN ALSA-RELATED"/>
    <property type="match status" value="1"/>
</dbReference>
<dbReference type="Pfam" id="PF00005">
    <property type="entry name" value="ABC_tran"/>
    <property type="match status" value="2"/>
</dbReference>
<dbReference type="SMART" id="SM00382">
    <property type="entry name" value="AAA"/>
    <property type="match status" value="2"/>
</dbReference>
<dbReference type="SUPFAM" id="SSF52540">
    <property type="entry name" value="P-loop containing nucleoside triphosphate hydrolases"/>
    <property type="match status" value="2"/>
</dbReference>
<dbReference type="PROSITE" id="PS00211">
    <property type="entry name" value="ABC_TRANSPORTER_1"/>
    <property type="match status" value="2"/>
</dbReference>
<dbReference type="PROSITE" id="PS50893">
    <property type="entry name" value="ABC_TRANSPORTER_2"/>
    <property type="match status" value="2"/>
</dbReference>
<dbReference type="PROSITE" id="PS51254">
    <property type="entry name" value="RBSA"/>
    <property type="match status" value="1"/>
</dbReference>